<reference key="1">
    <citation type="journal article" date="2004" name="Nat. Genet.">
        <title>Comparison of genome degradation in Paratyphi A and Typhi, human-restricted serovars of Salmonella enterica that cause typhoid.</title>
        <authorList>
            <person name="McClelland M."/>
            <person name="Sanderson K.E."/>
            <person name="Clifton S.W."/>
            <person name="Latreille P."/>
            <person name="Porwollik S."/>
            <person name="Sabo A."/>
            <person name="Meyer R."/>
            <person name="Bieri T."/>
            <person name="Ozersky P."/>
            <person name="McLellan M."/>
            <person name="Harkins C.R."/>
            <person name="Wang C."/>
            <person name="Nguyen C."/>
            <person name="Berghoff A."/>
            <person name="Elliott G."/>
            <person name="Kohlberg S."/>
            <person name="Strong C."/>
            <person name="Du F."/>
            <person name="Carter J."/>
            <person name="Kremizki C."/>
            <person name="Layman D."/>
            <person name="Leonard S."/>
            <person name="Sun H."/>
            <person name="Fulton L."/>
            <person name="Nash W."/>
            <person name="Miner T."/>
            <person name="Minx P."/>
            <person name="Delehaunty K."/>
            <person name="Fronick C."/>
            <person name="Magrini V."/>
            <person name="Nhan M."/>
            <person name="Warren W."/>
            <person name="Florea L."/>
            <person name="Spieth J."/>
            <person name="Wilson R.K."/>
        </authorList>
    </citation>
    <scope>NUCLEOTIDE SEQUENCE [LARGE SCALE GENOMIC DNA]</scope>
    <source>
        <strain>ATCC 9150 / SARB42</strain>
    </source>
</reference>
<feature type="chain" id="PRO_0000122590" description="Aminomethyltransferase">
    <location>
        <begin position="1"/>
        <end position="364"/>
    </location>
</feature>
<evidence type="ECO:0000255" key="1">
    <source>
        <dbReference type="HAMAP-Rule" id="MF_00259"/>
    </source>
</evidence>
<name>GCST_SALPA</name>
<keyword id="KW-0032">Aminotransferase</keyword>
<keyword id="KW-0808">Transferase</keyword>
<comment type="function">
    <text evidence="1">The glycine cleavage system catalyzes the degradation of glycine.</text>
</comment>
<comment type="catalytic activity">
    <reaction evidence="1">
        <text>N(6)-[(R)-S(8)-aminomethyldihydrolipoyl]-L-lysyl-[protein] + (6S)-5,6,7,8-tetrahydrofolate = N(6)-[(R)-dihydrolipoyl]-L-lysyl-[protein] + (6R)-5,10-methylene-5,6,7,8-tetrahydrofolate + NH4(+)</text>
        <dbReference type="Rhea" id="RHEA:16945"/>
        <dbReference type="Rhea" id="RHEA-COMP:10475"/>
        <dbReference type="Rhea" id="RHEA-COMP:10492"/>
        <dbReference type="ChEBI" id="CHEBI:15636"/>
        <dbReference type="ChEBI" id="CHEBI:28938"/>
        <dbReference type="ChEBI" id="CHEBI:57453"/>
        <dbReference type="ChEBI" id="CHEBI:83100"/>
        <dbReference type="ChEBI" id="CHEBI:83143"/>
        <dbReference type="EC" id="2.1.2.10"/>
    </reaction>
</comment>
<comment type="subunit">
    <text evidence="1">The glycine cleavage system is composed of four proteins: P, T, L and H.</text>
</comment>
<comment type="similarity">
    <text evidence="1">Belongs to the GcvT family.</text>
</comment>
<gene>
    <name evidence="1" type="primary">gcvT</name>
    <name type="ordered locus">SPA2923</name>
</gene>
<organism>
    <name type="scientific">Salmonella paratyphi A (strain ATCC 9150 / SARB42)</name>
    <dbReference type="NCBI Taxonomy" id="295319"/>
    <lineage>
        <taxon>Bacteria</taxon>
        <taxon>Pseudomonadati</taxon>
        <taxon>Pseudomonadota</taxon>
        <taxon>Gammaproteobacteria</taxon>
        <taxon>Enterobacterales</taxon>
        <taxon>Enterobacteriaceae</taxon>
        <taxon>Salmonella</taxon>
    </lineage>
</organism>
<proteinExistence type="inferred from homology"/>
<protein>
    <recommendedName>
        <fullName evidence="1">Aminomethyltransferase</fullName>
        <ecNumber evidence="1">2.1.2.10</ecNumber>
    </recommendedName>
    <alternativeName>
        <fullName evidence="1">Glycine cleavage system T protein</fullName>
    </alternativeName>
</protein>
<sequence>MAQQTPLYEQHTLCGARMVDFHGWMMPLHYGSQLDEHHAVRTDAGMFDVSHMTIVDLHGSRTREFLRYLLANDVAKLTKTGKALYSGMLNASGGVIDDLIVYYFTEDFFRLVVNSATREKDLSWITQHAEPYAIDITVRDDLSLIAVQGPNAQEKAATLFTDQQRHAVEGMKPFFGVQAGDLFIATTGYTGEAGYEIAMPNEKAADFWRALVEAGVKPCGLGARDTLRLEAGMNLYGQEMDEGISPLAANMGWTIAWEPADRDFIGREALEMQREKGHEQLVGLVMTEKGVLRNELPVRFTDAQGNQQEGIITSGTFSPTLGYSIALARVPAGIGETAIVQIRNREMPVKVTKPVFVRNGKAVA</sequence>
<dbReference type="EC" id="2.1.2.10" evidence="1"/>
<dbReference type="EMBL" id="CP000026">
    <property type="protein sequence ID" value="AAV78764.1"/>
    <property type="molecule type" value="Genomic_DNA"/>
</dbReference>
<dbReference type="RefSeq" id="WP_000068738.1">
    <property type="nucleotide sequence ID" value="NC_006511.1"/>
</dbReference>
<dbReference type="SMR" id="Q5PJG4"/>
<dbReference type="KEGG" id="spt:SPA2923"/>
<dbReference type="HOGENOM" id="CLU_007884_10_2_6"/>
<dbReference type="Proteomes" id="UP000008185">
    <property type="component" value="Chromosome"/>
</dbReference>
<dbReference type="GO" id="GO:0005829">
    <property type="term" value="C:cytosol"/>
    <property type="evidence" value="ECO:0007669"/>
    <property type="project" value="TreeGrafter"/>
</dbReference>
<dbReference type="GO" id="GO:0005960">
    <property type="term" value="C:glycine cleavage complex"/>
    <property type="evidence" value="ECO:0007669"/>
    <property type="project" value="InterPro"/>
</dbReference>
<dbReference type="GO" id="GO:0004047">
    <property type="term" value="F:aminomethyltransferase activity"/>
    <property type="evidence" value="ECO:0007669"/>
    <property type="project" value="UniProtKB-UniRule"/>
</dbReference>
<dbReference type="GO" id="GO:0008483">
    <property type="term" value="F:transaminase activity"/>
    <property type="evidence" value="ECO:0007669"/>
    <property type="project" value="UniProtKB-KW"/>
</dbReference>
<dbReference type="GO" id="GO:0019464">
    <property type="term" value="P:glycine decarboxylation via glycine cleavage system"/>
    <property type="evidence" value="ECO:0007669"/>
    <property type="project" value="UniProtKB-UniRule"/>
</dbReference>
<dbReference type="FunFam" id="2.40.30.110:FF:000001">
    <property type="entry name" value="Aminomethyltransferase"/>
    <property type="match status" value="1"/>
</dbReference>
<dbReference type="FunFam" id="3.30.70.1400:FF:000001">
    <property type="entry name" value="Aminomethyltransferase"/>
    <property type="match status" value="1"/>
</dbReference>
<dbReference type="FunFam" id="4.10.1250.10:FF:000001">
    <property type="entry name" value="Aminomethyltransferase"/>
    <property type="match status" value="1"/>
</dbReference>
<dbReference type="Gene3D" id="2.40.30.110">
    <property type="entry name" value="Aminomethyltransferase beta-barrel domains"/>
    <property type="match status" value="1"/>
</dbReference>
<dbReference type="Gene3D" id="3.30.70.1400">
    <property type="entry name" value="Aminomethyltransferase beta-barrel domains"/>
    <property type="match status" value="1"/>
</dbReference>
<dbReference type="Gene3D" id="4.10.1250.10">
    <property type="entry name" value="Aminomethyltransferase fragment"/>
    <property type="match status" value="1"/>
</dbReference>
<dbReference type="Gene3D" id="3.30.1360.120">
    <property type="entry name" value="Probable tRNA modification gtpase trme, domain 1"/>
    <property type="match status" value="1"/>
</dbReference>
<dbReference type="HAMAP" id="MF_00259">
    <property type="entry name" value="GcvT"/>
    <property type="match status" value="1"/>
</dbReference>
<dbReference type="InterPro" id="IPR006223">
    <property type="entry name" value="GCS_T"/>
</dbReference>
<dbReference type="InterPro" id="IPR022903">
    <property type="entry name" value="GCS_T_bac"/>
</dbReference>
<dbReference type="InterPro" id="IPR013977">
    <property type="entry name" value="GCST_C"/>
</dbReference>
<dbReference type="InterPro" id="IPR006222">
    <property type="entry name" value="GCV_T_N"/>
</dbReference>
<dbReference type="InterPro" id="IPR028896">
    <property type="entry name" value="GcvT/YgfZ/DmdA"/>
</dbReference>
<dbReference type="InterPro" id="IPR029043">
    <property type="entry name" value="GcvT/YgfZ_C"/>
</dbReference>
<dbReference type="InterPro" id="IPR027266">
    <property type="entry name" value="TrmE/GcvT_dom1"/>
</dbReference>
<dbReference type="NCBIfam" id="TIGR00528">
    <property type="entry name" value="gcvT"/>
    <property type="match status" value="1"/>
</dbReference>
<dbReference type="NCBIfam" id="NF001567">
    <property type="entry name" value="PRK00389.1"/>
    <property type="match status" value="1"/>
</dbReference>
<dbReference type="PANTHER" id="PTHR43757">
    <property type="entry name" value="AMINOMETHYLTRANSFERASE"/>
    <property type="match status" value="1"/>
</dbReference>
<dbReference type="PANTHER" id="PTHR43757:SF2">
    <property type="entry name" value="AMINOMETHYLTRANSFERASE, MITOCHONDRIAL"/>
    <property type="match status" value="1"/>
</dbReference>
<dbReference type="Pfam" id="PF01571">
    <property type="entry name" value="GCV_T"/>
    <property type="match status" value="1"/>
</dbReference>
<dbReference type="Pfam" id="PF08669">
    <property type="entry name" value="GCV_T_C"/>
    <property type="match status" value="1"/>
</dbReference>
<dbReference type="PIRSF" id="PIRSF006487">
    <property type="entry name" value="GcvT"/>
    <property type="match status" value="1"/>
</dbReference>
<dbReference type="SUPFAM" id="SSF101790">
    <property type="entry name" value="Aminomethyltransferase beta-barrel domain"/>
    <property type="match status" value="1"/>
</dbReference>
<dbReference type="SUPFAM" id="SSF103025">
    <property type="entry name" value="Folate-binding domain"/>
    <property type="match status" value="1"/>
</dbReference>
<accession>Q5PJG4</accession>